<sequence length="412" mass="45869">MESIRRNSRKEGIKERIFLTIGLLVLSRLGTFIPVPGVDHDAFYQSISTNPIVTFLNIFSGGGFASIGIFALGIVPYINASIVIQLATTSIPNLEKLQKEEGEAGRQKISQITRYRALGWAAIQSLGVSFWVRPYVFNWDSQFVVQMTLALTTGSMLIMWFSEQITEKGIGNGPSLLIFINIIAGLPKLIQQKSNAISSTNQTTELVVLASISVYDSRIFIRDRRYYILQTVGRHCKQTSYLPLRLNQGGVMPIIFASAILVLPAYLGQVIQNQFVLKLVTLLSPNSSDKNLYLIFYFSLILFFSYFYASLIINPNDVSQNLKKMESSIPGVRPGKATTDYLQKTLNRLTFLGALFLAFIAVVPSIIENITSISTFKGLGATSLLILVGVAIDTSRQIQTYLISRNYENIMK</sequence>
<organism>
    <name type="scientific">Pyrenomonas salina</name>
    <dbReference type="NCBI Taxonomy" id="3034"/>
    <lineage>
        <taxon>Eukaryota</taxon>
        <taxon>Cryptophyceae</taxon>
        <taxon>Pyrenomonadales</taxon>
        <taxon>Pyrenomonadaceae</taxon>
        <taxon>Pyrenomonas</taxon>
    </lineage>
</organism>
<evidence type="ECO:0000255" key="1">
    <source>
        <dbReference type="HAMAP-Rule" id="MF_01465"/>
    </source>
</evidence>
<dbReference type="EMBL" id="X74773">
    <property type="protein sequence ID" value="CAA52783.1"/>
    <property type="molecule type" value="Genomic_DNA"/>
</dbReference>
<dbReference type="SMR" id="P38397"/>
<dbReference type="GO" id="GO:0009535">
    <property type="term" value="C:chloroplast thylakoid membrane"/>
    <property type="evidence" value="ECO:0007669"/>
    <property type="project" value="UniProtKB-SubCell"/>
</dbReference>
<dbReference type="GO" id="GO:0015031">
    <property type="term" value="P:protein transport"/>
    <property type="evidence" value="ECO:0007669"/>
    <property type="project" value="UniProtKB-KW"/>
</dbReference>
<dbReference type="FunFam" id="1.10.3370.10:FF:000001">
    <property type="entry name" value="Preprotein translocase subunit SecY"/>
    <property type="match status" value="1"/>
</dbReference>
<dbReference type="Gene3D" id="1.10.3370.10">
    <property type="entry name" value="SecY subunit domain"/>
    <property type="match status" value="1"/>
</dbReference>
<dbReference type="HAMAP" id="MF_01465">
    <property type="entry name" value="SecY"/>
    <property type="match status" value="1"/>
</dbReference>
<dbReference type="InterPro" id="IPR026593">
    <property type="entry name" value="SecY"/>
</dbReference>
<dbReference type="InterPro" id="IPR002208">
    <property type="entry name" value="SecY/SEC61-alpha"/>
</dbReference>
<dbReference type="InterPro" id="IPR030659">
    <property type="entry name" value="SecY_CS"/>
</dbReference>
<dbReference type="InterPro" id="IPR023201">
    <property type="entry name" value="SecY_dom_sf"/>
</dbReference>
<dbReference type="NCBIfam" id="TIGR00967">
    <property type="entry name" value="3a0501s007"/>
    <property type="match status" value="1"/>
</dbReference>
<dbReference type="PANTHER" id="PTHR10906">
    <property type="entry name" value="SECY/SEC61-ALPHA FAMILY MEMBER"/>
    <property type="match status" value="1"/>
</dbReference>
<dbReference type="Pfam" id="PF00344">
    <property type="entry name" value="SecY"/>
    <property type="match status" value="1"/>
</dbReference>
<dbReference type="PIRSF" id="PIRSF004557">
    <property type="entry name" value="SecY"/>
    <property type="match status" value="1"/>
</dbReference>
<dbReference type="PRINTS" id="PR00303">
    <property type="entry name" value="SECYTRNLCASE"/>
</dbReference>
<dbReference type="SUPFAM" id="SSF103491">
    <property type="entry name" value="Preprotein translocase SecY subunit"/>
    <property type="match status" value="1"/>
</dbReference>
<dbReference type="PROSITE" id="PS00755">
    <property type="entry name" value="SECY_1"/>
    <property type="match status" value="1"/>
</dbReference>
<dbReference type="PROSITE" id="PS00756">
    <property type="entry name" value="SECY_2"/>
    <property type="match status" value="1"/>
</dbReference>
<reference key="1">
    <citation type="journal article" date="1994" name="Mol. Phylogenet. Evol.">
        <title>The SecY protein family: comparative analysis and phylogenetic relationships.</title>
        <authorList>
            <person name="Rensing S.A."/>
            <person name="Maier U.-G."/>
        </authorList>
    </citation>
    <scope>NUCLEOTIDE SEQUENCE [GENOMIC DNA]</scope>
</reference>
<keyword id="KW-0150">Chloroplast</keyword>
<keyword id="KW-0472">Membrane</keyword>
<keyword id="KW-0934">Plastid</keyword>
<keyword id="KW-0653">Protein transport</keyword>
<keyword id="KW-0793">Thylakoid</keyword>
<keyword id="KW-0811">Translocation</keyword>
<keyword id="KW-0812">Transmembrane</keyword>
<keyword id="KW-1133">Transmembrane helix</keyword>
<keyword id="KW-0813">Transport</keyword>
<comment type="function">
    <text evidence="1">The central subunit of the protein translocation channel SecYE. Consists of two halves formed by TMs 1-5 and 6-10. These two domains form a lateral gate at the front which open onto the bilayer between TMs 2 and 7, and are clamped together by SecE at the back. The channel is closed by both a pore ring composed of hydrophobic SecY resides and a short helix (helix 2A) on the extracellular side of the membrane which forms a plug.</text>
</comment>
<comment type="subunit">
    <text evidence="1">Component of the plastid Sec protein translocase complex, which is composed of at least SecY and SecE.</text>
</comment>
<comment type="subcellular location">
    <subcellularLocation>
        <location evidence="1">Plastid</location>
        <location evidence="1">Chloroplast thylakoid membrane</location>
        <topology evidence="1">Multi-pass membrane protein</topology>
    </subcellularLocation>
</comment>
<comment type="similarity">
    <text evidence="1">Belongs to the SecY/SEC61-alpha family.</text>
</comment>
<geneLocation type="chloroplast"/>
<protein>
    <recommendedName>
        <fullName evidence="1">Protein translocase subunit SecY</fullName>
    </recommendedName>
</protein>
<accession>P38397</accession>
<gene>
    <name evidence="1" type="primary">secY</name>
</gene>
<feature type="chain" id="PRO_0000131779" description="Protein translocase subunit SecY">
    <location>
        <begin position="1"/>
        <end position="412" status="greater than"/>
    </location>
</feature>
<feature type="transmembrane region" description="Helical" evidence="1">
    <location>
        <begin position="17"/>
        <end position="37"/>
    </location>
</feature>
<feature type="transmembrane region" description="Helical" evidence="1">
    <location>
        <begin position="58"/>
        <end position="78"/>
    </location>
</feature>
<feature type="transmembrane region" description="Helical" evidence="1">
    <location>
        <begin position="117"/>
        <end position="137"/>
    </location>
</feature>
<feature type="transmembrane region" description="Helical" evidence="1">
    <location>
        <begin position="143"/>
        <end position="163"/>
    </location>
</feature>
<feature type="transmembrane region" description="Helical" evidence="1">
    <location>
        <begin position="170"/>
        <end position="190"/>
    </location>
</feature>
<feature type="transmembrane region" description="Helical" evidence="1">
    <location>
        <begin position="251"/>
        <end position="271"/>
    </location>
</feature>
<feature type="transmembrane region" description="Helical" evidence="1">
    <location>
        <begin position="293"/>
        <end position="313"/>
    </location>
</feature>
<feature type="transmembrane region" description="Helical" evidence="1">
    <location>
        <begin position="350"/>
        <end position="370"/>
    </location>
</feature>
<feature type="transmembrane region" description="Helical" evidence="1">
    <location>
        <begin position="372"/>
        <end position="392"/>
    </location>
</feature>
<feature type="non-terminal residue">
    <location>
        <position position="412"/>
    </location>
</feature>
<name>SECY_PYRSA</name>
<proteinExistence type="inferred from homology"/>